<comment type="similarity">
    <text evidence="2">Belongs to the UPF0213 family.</text>
</comment>
<organism>
    <name type="scientific">Bacillus anthracis</name>
    <dbReference type="NCBI Taxonomy" id="1392"/>
    <lineage>
        <taxon>Bacteria</taxon>
        <taxon>Bacillati</taxon>
        <taxon>Bacillota</taxon>
        <taxon>Bacilli</taxon>
        <taxon>Bacillales</taxon>
        <taxon>Bacillaceae</taxon>
        <taxon>Bacillus</taxon>
        <taxon>Bacillus cereus group</taxon>
    </lineage>
</organism>
<keyword id="KW-1185">Reference proteome</keyword>
<evidence type="ECO:0000255" key="1">
    <source>
        <dbReference type="PROSITE-ProRule" id="PRU00977"/>
    </source>
</evidence>
<evidence type="ECO:0000305" key="2"/>
<gene>
    <name type="ordered locus">BA_0032</name>
    <name type="ordered locus">GBAA_0032</name>
    <name type="ordered locus">BAS0034</name>
</gene>
<feature type="chain" id="PRO_0000161350" description="UPF0213 protein BA_0032/GBAA_0032/BAS0034">
    <location>
        <begin position="1"/>
        <end position="96"/>
    </location>
</feature>
<feature type="domain" description="GIY-YIG" evidence="1">
    <location>
        <begin position="4"/>
        <end position="79"/>
    </location>
</feature>
<name>Y032_BACAN</name>
<sequence>MEKNKHCFYVVECSDGSYYAGYTNHIEKRIGTHNSGRGAKYTRARLPVVLKYVEFHEDKRTAMQAEYYFKQLNRKQKEEYMQKGERYVATKKLSTK</sequence>
<reference key="1">
    <citation type="journal article" date="2003" name="Nature">
        <title>The genome sequence of Bacillus anthracis Ames and comparison to closely related bacteria.</title>
        <authorList>
            <person name="Read T.D."/>
            <person name="Peterson S.N."/>
            <person name="Tourasse N.J."/>
            <person name="Baillie L.W."/>
            <person name="Paulsen I.T."/>
            <person name="Nelson K.E."/>
            <person name="Tettelin H."/>
            <person name="Fouts D.E."/>
            <person name="Eisen J.A."/>
            <person name="Gill S.R."/>
            <person name="Holtzapple E.K."/>
            <person name="Okstad O.A."/>
            <person name="Helgason E."/>
            <person name="Rilstone J."/>
            <person name="Wu M."/>
            <person name="Kolonay J.F."/>
            <person name="Beanan M.J."/>
            <person name="Dodson R.J."/>
            <person name="Brinkac L.M."/>
            <person name="Gwinn M.L."/>
            <person name="DeBoy R.T."/>
            <person name="Madpu R."/>
            <person name="Daugherty S.C."/>
            <person name="Durkin A.S."/>
            <person name="Haft D.H."/>
            <person name="Nelson W.C."/>
            <person name="Peterson J.D."/>
            <person name="Pop M."/>
            <person name="Khouri H.M."/>
            <person name="Radune D."/>
            <person name="Benton J.L."/>
            <person name="Mahamoud Y."/>
            <person name="Jiang L."/>
            <person name="Hance I.R."/>
            <person name="Weidman J.F."/>
            <person name="Berry K.J."/>
            <person name="Plaut R.D."/>
            <person name="Wolf A.M."/>
            <person name="Watkins K.L."/>
            <person name="Nierman W.C."/>
            <person name="Hazen A."/>
            <person name="Cline R.T."/>
            <person name="Redmond C."/>
            <person name="Thwaite J.E."/>
            <person name="White O."/>
            <person name="Salzberg S.L."/>
            <person name="Thomason B."/>
            <person name="Friedlander A.M."/>
            <person name="Koehler T.M."/>
            <person name="Hanna P.C."/>
            <person name="Kolstoe A.-B."/>
            <person name="Fraser C.M."/>
        </authorList>
    </citation>
    <scope>NUCLEOTIDE SEQUENCE [LARGE SCALE GENOMIC DNA]</scope>
    <source>
        <strain>Ames / isolate Porton</strain>
    </source>
</reference>
<reference key="2">
    <citation type="journal article" date="2009" name="J. Bacteriol.">
        <title>The complete genome sequence of Bacillus anthracis Ames 'Ancestor'.</title>
        <authorList>
            <person name="Ravel J."/>
            <person name="Jiang L."/>
            <person name="Stanley S.T."/>
            <person name="Wilson M.R."/>
            <person name="Decker R.S."/>
            <person name="Read T.D."/>
            <person name="Worsham P."/>
            <person name="Keim P.S."/>
            <person name="Salzberg S.L."/>
            <person name="Fraser-Liggett C.M."/>
            <person name="Rasko D.A."/>
        </authorList>
    </citation>
    <scope>NUCLEOTIDE SEQUENCE [LARGE SCALE GENOMIC DNA]</scope>
    <source>
        <strain>Ames ancestor</strain>
    </source>
</reference>
<reference key="3">
    <citation type="submission" date="2004-01" db="EMBL/GenBank/DDBJ databases">
        <title>Complete genome sequence of Bacillus anthracis Sterne.</title>
        <authorList>
            <person name="Brettin T.S."/>
            <person name="Bruce D."/>
            <person name="Challacombe J.F."/>
            <person name="Gilna P."/>
            <person name="Han C."/>
            <person name="Hill K."/>
            <person name="Hitchcock P."/>
            <person name="Jackson P."/>
            <person name="Keim P."/>
            <person name="Longmire J."/>
            <person name="Lucas S."/>
            <person name="Okinaka R."/>
            <person name="Richardson P."/>
            <person name="Rubin E."/>
            <person name="Tice H."/>
        </authorList>
    </citation>
    <scope>NUCLEOTIDE SEQUENCE [LARGE SCALE GENOMIC DNA]</scope>
    <source>
        <strain>Sterne</strain>
    </source>
</reference>
<protein>
    <recommendedName>
        <fullName>UPF0213 protein BA_0032/GBAA_0032/BAS0034</fullName>
    </recommendedName>
</protein>
<accession>Q81W06</accession>
<accession>Q6I509</accession>
<accession>Q6KYQ3</accession>
<dbReference type="EMBL" id="AE016879">
    <property type="protein sequence ID" value="AAP24088.1"/>
    <property type="molecule type" value="Genomic_DNA"/>
</dbReference>
<dbReference type="EMBL" id="AE017334">
    <property type="protein sequence ID" value="AAT29112.1"/>
    <property type="molecule type" value="Genomic_DNA"/>
</dbReference>
<dbReference type="EMBL" id="AE017225">
    <property type="protein sequence ID" value="AAT52372.1"/>
    <property type="molecule type" value="Genomic_DNA"/>
</dbReference>
<dbReference type="RefSeq" id="NP_842602.1">
    <property type="nucleotide sequence ID" value="NC_003997.3"/>
</dbReference>
<dbReference type="RefSeq" id="WP_000414342.1">
    <property type="nucleotide sequence ID" value="NZ_WXXJ01000001.1"/>
</dbReference>
<dbReference type="RefSeq" id="YP_026321.1">
    <property type="nucleotide sequence ID" value="NC_005945.1"/>
</dbReference>
<dbReference type="SMR" id="Q81W06"/>
<dbReference type="STRING" id="261594.GBAA_0032"/>
<dbReference type="DNASU" id="1085930"/>
<dbReference type="GeneID" id="45020075"/>
<dbReference type="KEGG" id="ban:BA_0032"/>
<dbReference type="KEGG" id="bar:GBAA_0032"/>
<dbReference type="KEGG" id="bat:BAS0034"/>
<dbReference type="PATRIC" id="fig|198094.11.peg.31"/>
<dbReference type="eggNOG" id="COG2827">
    <property type="taxonomic scope" value="Bacteria"/>
</dbReference>
<dbReference type="HOGENOM" id="CLU_135650_0_3_9"/>
<dbReference type="OMA" id="VYVEQWP"/>
<dbReference type="OrthoDB" id="9807770at2"/>
<dbReference type="Proteomes" id="UP000000427">
    <property type="component" value="Chromosome"/>
</dbReference>
<dbReference type="Proteomes" id="UP000000594">
    <property type="component" value="Chromosome"/>
</dbReference>
<dbReference type="CDD" id="cd10456">
    <property type="entry name" value="GIY-YIG_UPF0213"/>
    <property type="match status" value="1"/>
</dbReference>
<dbReference type="Gene3D" id="3.40.1440.10">
    <property type="entry name" value="GIY-YIG endonuclease"/>
    <property type="match status" value="1"/>
</dbReference>
<dbReference type="InterPro" id="IPR000305">
    <property type="entry name" value="GIY-YIG_endonuc"/>
</dbReference>
<dbReference type="InterPro" id="IPR035901">
    <property type="entry name" value="GIY-YIG_endonuc_sf"/>
</dbReference>
<dbReference type="InterPro" id="IPR050190">
    <property type="entry name" value="UPF0213_domain"/>
</dbReference>
<dbReference type="PANTHER" id="PTHR34477">
    <property type="entry name" value="UPF0213 PROTEIN YHBQ"/>
    <property type="match status" value="1"/>
</dbReference>
<dbReference type="PANTHER" id="PTHR34477:SF1">
    <property type="entry name" value="UPF0213 PROTEIN YHBQ"/>
    <property type="match status" value="1"/>
</dbReference>
<dbReference type="Pfam" id="PF01541">
    <property type="entry name" value="GIY-YIG"/>
    <property type="match status" value="1"/>
</dbReference>
<dbReference type="SUPFAM" id="SSF82771">
    <property type="entry name" value="GIY-YIG endonuclease"/>
    <property type="match status" value="1"/>
</dbReference>
<dbReference type="PROSITE" id="PS50164">
    <property type="entry name" value="GIY_YIG"/>
    <property type="match status" value="1"/>
</dbReference>
<proteinExistence type="inferred from homology"/>